<evidence type="ECO:0000255" key="1">
    <source>
        <dbReference type="HAMAP-Rule" id="MF_00578"/>
    </source>
</evidence>
<protein>
    <recommendedName>
        <fullName evidence="1">Glutamate--cysteine ligase</fullName>
        <ecNumber evidence="1">6.3.2.2</ecNumber>
    </recommendedName>
    <alternativeName>
        <fullName evidence="1">Gamma-ECS</fullName>
        <shortName evidence="1">GCS</shortName>
    </alternativeName>
    <alternativeName>
        <fullName evidence="1">Gamma-glutamylcysteine synthetase</fullName>
    </alternativeName>
</protein>
<name>GSH1_SALA4</name>
<keyword id="KW-0067">ATP-binding</keyword>
<keyword id="KW-0317">Glutathione biosynthesis</keyword>
<keyword id="KW-0436">Ligase</keyword>
<keyword id="KW-0547">Nucleotide-binding</keyword>
<reference key="1">
    <citation type="journal article" date="2011" name="J. Bacteriol.">
        <title>Comparative genomics of 28 Salmonella enterica isolates: evidence for CRISPR-mediated adaptive sublineage evolution.</title>
        <authorList>
            <person name="Fricke W.F."/>
            <person name="Mammel M.K."/>
            <person name="McDermott P.F."/>
            <person name="Tartera C."/>
            <person name="White D.G."/>
            <person name="Leclerc J.E."/>
            <person name="Ravel J."/>
            <person name="Cebula T.A."/>
        </authorList>
    </citation>
    <scope>NUCLEOTIDE SEQUENCE [LARGE SCALE GENOMIC DNA]</scope>
    <source>
        <strain>SL483</strain>
    </source>
</reference>
<comment type="catalytic activity">
    <reaction evidence="1">
        <text>L-cysteine + L-glutamate + ATP = gamma-L-glutamyl-L-cysteine + ADP + phosphate + H(+)</text>
        <dbReference type="Rhea" id="RHEA:13285"/>
        <dbReference type="ChEBI" id="CHEBI:15378"/>
        <dbReference type="ChEBI" id="CHEBI:29985"/>
        <dbReference type="ChEBI" id="CHEBI:30616"/>
        <dbReference type="ChEBI" id="CHEBI:35235"/>
        <dbReference type="ChEBI" id="CHEBI:43474"/>
        <dbReference type="ChEBI" id="CHEBI:58173"/>
        <dbReference type="ChEBI" id="CHEBI:456216"/>
        <dbReference type="EC" id="6.3.2.2"/>
    </reaction>
</comment>
<comment type="pathway">
    <text evidence="1">Sulfur metabolism; glutathione biosynthesis; glutathione from L-cysteine and L-glutamate: step 1/2.</text>
</comment>
<comment type="similarity">
    <text evidence="1">Belongs to the glutamate--cysteine ligase type 1 family. Type 1 subfamily.</text>
</comment>
<proteinExistence type="inferred from homology"/>
<feature type="chain" id="PRO_1000129601" description="Glutamate--cysteine ligase">
    <location>
        <begin position="1"/>
        <end position="518"/>
    </location>
</feature>
<sequence>MIPDVSQALAWLEKHPQALKGIQRGLERETLRVNADGTLATTGHPEALGSALTHKWITTDFAEALLEFITPVDGDIQHMLTFMRDLHRYTARKLGDERMWPLSMPCYIAEGQDIELAQYGTSNTGRFKTLYREGLKNRYGALMQTISGVHYNFSLPMAFWQAKCGVTEGEAAKEKISAGYFRLIRNYYRFGWVIPYLFGASPAICSSFLQGKPTTLPFEKTDCGMYYLPYATSLRLSDLGYTNKSQSNLGITFNDLHEYVAGLKRAIKTPSEEYARIGVEKDGKRLQINSNVLQIENELYAPIRPKRVTRSGESPSDALLRGGIEYIEVRSLDINPFSPIGVDEQQVRFLDLFMVWCVLADAPEMSSDELLCTRTNWNRVILEGRKPGLTLGIGCETAQFPLPKVGKDLFRDLKRVAQTLDSIHGGEEYQKVCDELVACFDNPELTFSARILRSMIDEGIGGTGKAFGEAYRNLLREEPLEILQEEEFIAERDASVRRQQEIEAADTEPFAAWLAKHA</sequence>
<accession>B5F346</accession>
<dbReference type="EC" id="6.3.2.2" evidence="1"/>
<dbReference type="EMBL" id="CP001138">
    <property type="protein sequence ID" value="ACH48936.1"/>
    <property type="molecule type" value="Genomic_DNA"/>
</dbReference>
<dbReference type="RefSeq" id="WP_000611821.1">
    <property type="nucleotide sequence ID" value="NC_011149.1"/>
</dbReference>
<dbReference type="SMR" id="B5F346"/>
<dbReference type="KEGG" id="sea:SeAg_B2937"/>
<dbReference type="HOGENOM" id="CLU_020728_3_0_6"/>
<dbReference type="UniPathway" id="UPA00142">
    <property type="reaction ID" value="UER00209"/>
</dbReference>
<dbReference type="Proteomes" id="UP000008819">
    <property type="component" value="Chromosome"/>
</dbReference>
<dbReference type="GO" id="GO:0005829">
    <property type="term" value="C:cytosol"/>
    <property type="evidence" value="ECO:0007669"/>
    <property type="project" value="TreeGrafter"/>
</dbReference>
<dbReference type="GO" id="GO:0005524">
    <property type="term" value="F:ATP binding"/>
    <property type="evidence" value="ECO:0007669"/>
    <property type="project" value="UniProtKB-KW"/>
</dbReference>
<dbReference type="GO" id="GO:0004357">
    <property type="term" value="F:glutamate-cysteine ligase activity"/>
    <property type="evidence" value="ECO:0007669"/>
    <property type="project" value="UniProtKB-UniRule"/>
</dbReference>
<dbReference type="GO" id="GO:0046872">
    <property type="term" value="F:metal ion binding"/>
    <property type="evidence" value="ECO:0007669"/>
    <property type="project" value="TreeGrafter"/>
</dbReference>
<dbReference type="GO" id="GO:0006750">
    <property type="term" value="P:glutathione biosynthetic process"/>
    <property type="evidence" value="ECO:0007669"/>
    <property type="project" value="UniProtKB-UniRule"/>
</dbReference>
<dbReference type="FunFam" id="3.30.590.20:FF:000001">
    <property type="entry name" value="Glutamate--cysteine ligase"/>
    <property type="match status" value="1"/>
</dbReference>
<dbReference type="Gene3D" id="3.30.590.20">
    <property type="match status" value="1"/>
</dbReference>
<dbReference type="HAMAP" id="MF_00578">
    <property type="entry name" value="Glu_cys_ligase"/>
    <property type="match status" value="1"/>
</dbReference>
<dbReference type="InterPro" id="IPR014746">
    <property type="entry name" value="Gln_synth/guanido_kin_cat_dom"/>
</dbReference>
<dbReference type="InterPro" id="IPR007370">
    <property type="entry name" value="Glu_cys_ligase"/>
</dbReference>
<dbReference type="InterPro" id="IPR006334">
    <property type="entry name" value="Glut_cys_ligase"/>
</dbReference>
<dbReference type="NCBIfam" id="TIGR01434">
    <property type="entry name" value="glu_cys_ligase"/>
    <property type="match status" value="1"/>
</dbReference>
<dbReference type="PANTHER" id="PTHR38761">
    <property type="entry name" value="GLUTAMATE--CYSTEINE LIGASE"/>
    <property type="match status" value="1"/>
</dbReference>
<dbReference type="PANTHER" id="PTHR38761:SF1">
    <property type="entry name" value="GLUTAMATE--CYSTEINE LIGASE"/>
    <property type="match status" value="1"/>
</dbReference>
<dbReference type="Pfam" id="PF04262">
    <property type="entry name" value="Glu_cys_ligase"/>
    <property type="match status" value="1"/>
</dbReference>
<dbReference type="SUPFAM" id="SSF55931">
    <property type="entry name" value="Glutamine synthetase/guanido kinase"/>
    <property type="match status" value="1"/>
</dbReference>
<organism>
    <name type="scientific">Salmonella agona (strain SL483)</name>
    <dbReference type="NCBI Taxonomy" id="454166"/>
    <lineage>
        <taxon>Bacteria</taxon>
        <taxon>Pseudomonadati</taxon>
        <taxon>Pseudomonadota</taxon>
        <taxon>Gammaproteobacteria</taxon>
        <taxon>Enterobacterales</taxon>
        <taxon>Enterobacteriaceae</taxon>
        <taxon>Salmonella</taxon>
    </lineage>
</organism>
<gene>
    <name evidence="1" type="primary">gshA</name>
    <name type="ordered locus">SeAg_B2937</name>
</gene>